<name>HSLU_RALPJ</name>
<reference key="1">
    <citation type="submission" date="2008-05" db="EMBL/GenBank/DDBJ databases">
        <title>Complete sequence of chromosome 1 of Ralstonia pickettii 12J.</title>
        <authorList>
            <person name="Lucas S."/>
            <person name="Copeland A."/>
            <person name="Lapidus A."/>
            <person name="Glavina del Rio T."/>
            <person name="Dalin E."/>
            <person name="Tice H."/>
            <person name="Bruce D."/>
            <person name="Goodwin L."/>
            <person name="Pitluck S."/>
            <person name="Meincke L."/>
            <person name="Brettin T."/>
            <person name="Detter J.C."/>
            <person name="Han C."/>
            <person name="Kuske C.R."/>
            <person name="Schmutz J."/>
            <person name="Larimer F."/>
            <person name="Land M."/>
            <person name="Hauser L."/>
            <person name="Kyrpides N."/>
            <person name="Mikhailova N."/>
            <person name="Marsh T."/>
            <person name="Richardson P."/>
        </authorList>
    </citation>
    <scope>NUCLEOTIDE SEQUENCE [LARGE SCALE GENOMIC DNA]</scope>
    <source>
        <strain>12J</strain>
    </source>
</reference>
<comment type="function">
    <text evidence="1">ATPase subunit of a proteasome-like degradation complex; this subunit has chaperone activity. The binding of ATP and its subsequent hydrolysis by HslU are essential for unfolding of protein substrates subsequently hydrolyzed by HslV. HslU recognizes the N-terminal part of its protein substrates and unfolds these before they are guided to HslV for hydrolysis.</text>
</comment>
<comment type="subunit">
    <text evidence="1">A double ring-shaped homohexamer of HslV is capped on each side by a ring-shaped HslU homohexamer. The assembly of the HslU/HslV complex is dependent on binding of ATP.</text>
</comment>
<comment type="subcellular location">
    <subcellularLocation>
        <location evidence="1">Cytoplasm</location>
    </subcellularLocation>
</comment>
<comment type="similarity">
    <text evidence="1">Belongs to the ClpX chaperone family. HslU subfamily.</text>
</comment>
<proteinExistence type="inferred from homology"/>
<evidence type="ECO:0000255" key="1">
    <source>
        <dbReference type="HAMAP-Rule" id="MF_00249"/>
    </source>
</evidence>
<accession>B2U7X3</accession>
<sequence length="443" mass="49434">MSETMTPSEIVSELDKHIIGQHKAKKAVAVALRNRWRRQQVGDPLRQEITPKNILMIGPTGVGKTEIARRLAKLADAPFIKIEATKFTEVGYVGRDVDTIVRDLAEMAVKQTRESEMKKVRAKAEDAAEDRILDVLIPPPRDIGFAQPEEKDSTARQTFRKKLREGQLDDKEIELEVSAGAPSMDIMGPPGMEDMTEQIRSMFAGLGQGKKNRRKMKVSEAFKLLIDEEAAKLVNEDELKQKAVANVEQNGIVFLDEIDKIASRSEYGGGEVSRQGVQRDLLPLVEGTTVNTKYGMIKTDHILFIASGAFHLSKPSDLIPELQGRFPIRVELDSLSVEDFRAILTQTDASLTKQYQALLKTEGVDLVFAEDGIRRLAEIACSVNEKVENIGARRLYTVMERLLEDLSFHAHKSSGETVTIDAAYVDERLSELSGNEDLSRYVL</sequence>
<gene>
    <name evidence="1" type="primary">hslU</name>
    <name type="ordered locus">Rpic_3708</name>
</gene>
<dbReference type="EMBL" id="CP001068">
    <property type="protein sequence ID" value="ACD28826.1"/>
    <property type="molecule type" value="Genomic_DNA"/>
</dbReference>
<dbReference type="SMR" id="B2U7X3"/>
<dbReference type="STRING" id="402626.Rpic_3708"/>
<dbReference type="KEGG" id="rpi:Rpic_3708"/>
<dbReference type="eggNOG" id="COG1220">
    <property type="taxonomic scope" value="Bacteria"/>
</dbReference>
<dbReference type="HOGENOM" id="CLU_033123_0_0_4"/>
<dbReference type="GO" id="GO:0009376">
    <property type="term" value="C:HslUV protease complex"/>
    <property type="evidence" value="ECO:0007669"/>
    <property type="project" value="UniProtKB-UniRule"/>
</dbReference>
<dbReference type="GO" id="GO:0005524">
    <property type="term" value="F:ATP binding"/>
    <property type="evidence" value="ECO:0007669"/>
    <property type="project" value="UniProtKB-UniRule"/>
</dbReference>
<dbReference type="GO" id="GO:0016887">
    <property type="term" value="F:ATP hydrolysis activity"/>
    <property type="evidence" value="ECO:0007669"/>
    <property type="project" value="InterPro"/>
</dbReference>
<dbReference type="GO" id="GO:0008233">
    <property type="term" value="F:peptidase activity"/>
    <property type="evidence" value="ECO:0007669"/>
    <property type="project" value="InterPro"/>
</dbReference>
<dbReference type="GO" id="GO:0036402">
    <property type="term" value="F:proteasome-activating activity"/>
    <property type="evidence" value="ECO:0007669"/>
    <property type="project" value="UniProtKB-UniRule"/>
</dbReference>
<dbReference type="GO" id="GO:0043335">
    <property type="term" value="P:protein unfolding"/>
    <property type="evidence" value="ECO:0007669"/>
    <property type="project" value="UniProtKB-UniRule"/>
</dbReference>
<dbReference type="GO" id="GO:0051603">
    <property type="term" value="P:proteolysis involved in protein catabolic process"/>
    <property type="evidence" value="ECO:0007669"/>
    <property type="project" value="TreeGrafter"/>
</dbReference>
<dbReference type="CDD" id="cd19498">
    <property type="entry name" value="RecA-like_HslU"/>
    <property type="match status" value="1"/>
</dbReference>
<dbReference type="FunFam" id="1.10.8.10:FF:000028">
    <property type="entry name" value="ATP-dependent protease ATPase subunit HslU"/>
    <property type="match status" value="1"/>
</dbReference>
<dbReference type="FunFam" id="3.40.50.300:FF:000213">
    <property type="entry name" value="ATP-dependent protease ATPase subunit HslU"/>
    <property type="match status" value="1"/>
</dbReference>
<dbReference type="FunFam" id="3.40.50.300:FF:000220">
    <property type="entry name" value="ATP-dependent protease ATPase subunit HslU"/>
    <property type="match status" value="1"/>
</dbReference>
<dbReference type="Gene3D" id="1.10.8.60">
    <property type="match status" value="1"/>
</dbReference>
<dbReference type="Gene3D" id="1.10.8.10">
    <property type="entry name" value="DNA helicase RuvA subunit, C-terminal domain"/>
    <property type="match status" value="1"/>
</dbReference>
<dbReference type="Gene3D" id="3.40.50.300">
    <property type="entry name" value="P-loop containing nucleotide triphosphate hydrolases"/>
    <property type="match status" value="2"/>
</dbReference>
<dbReference type="HAMAP" id="MF_00249">
    <property type="entry name" value="HslU"/>
    <property type="match status" value="1"/>
</dbReference>
<dbReference type="InterPro" id="IPR003593">
    <property type="entry name" value="AAA+_ATPase"/>
</dbReference>
<dbReference type="InterPro" id="IPR050052">
    <property type="entry name" value="ATP-dep_Clp_protease_ClpX"/>
</dbReference>
<dbReference type="InterPro" id="IPR003959">
    <property type="entry name" value="ATPase_AAA_core"/>
</dbReference>
<dbReference type="InterPro" id="IPR019489">
    <property type="entry name" value="Clp_ATPase_C"/>
</dbReference>
<dbReference type="InterPro" id="IPR004491">
    <property type="entry name" value="HslU"/>
</dbReference>
<dbReference type="InterPro" id="IPR027417">
    <property type="entry name" value="P-loop_NTPase"/>
</dbReference>
<dbReference type="NCBIfam" id="TIGR00390">
    <property type="entry name" value="hslU"/>
    <property type="match status" value="1"/>
</dbReference>
<dbReference type="NCBIfam" id="NF003544">
    <property type="entry name" value="PRK05201.1"/>
    <property type="match status" value="1"/>
</dbReference>
<dbReference type="PANTHER" id="PTHR48102">
    <property type="entry name" value="ATP-DEPENDENT CLP PROTEASE ATP-BINDING SUBUNIT CLPX-LIKE, MITOCHONDRIAL-RELATED"/>
    <property type="match status" value="1"/>
</dbReference>
<dbReference type="PANTHER" id="PTHR48102:SF3">
    <property type="entry name" value="ATP-DEPENDENT PROTEASE ATPASE SUBUNIT HSLU"/>
    <property type="match status" value="1"/>
</dbReference>
<dbReference type="Pfam" id="PF00004">
    <property type="entry name" value="AAA"/>
    <property type="match status" value="1"/>
</dbReference>
<dbReference type="Pfam" id="PF07724">
    <property type="entry name" value="AAA_2"/>
    <property type="match status" value="1"/>
</dbReference>
<dbReference type="SMART" id="SM00382">
    <property type="entry name" value="AAA"/>
    <property type="match status" value="1"/>
</dbReference>
<dbReference type="SMART" id="SM01086">
    <property type="entry name" value="ClpB_D2-small"/>
    <property type="match status" value="1"/>
</dbReference>
<dbReference type="SUPFAM" id="SSF52540">
    <property type="entry name" value="P-loop containing nucleoside triphosphate hydrolases"/>
    <property type="match status" value="1"/>
</dbReference>
<keyword id="KW-0067">ATP-binding</keyword>
<keyword id="KW-0143">Chaperone</keyword>
<keyword id="KW-0963">Cytoplasm</keyword>
<keyword id="KW-0547">Nucleotide-binding</keyword>
<keyword id="KW-0346">Stress response</keyword>
<protein>
    <recommendedName>
        <fullName evidence="1">ATP-dependent protease ATPase subunit HslU</fullName>
    </recommendedName>
    <alternativeName>
        <fullName evidence="1">Unfoldase HslU</fullName>
    </alternativeName>
</protein>
<feature type="chain" id="PRO_1000100963" description="ATP-dependent protease ATPase subunit HslU">
    <location>
        <begin position="1"/>
        <end position="443"/>
    </location>
</feature>
<feature type="binding site" evidence="1">
    <location>
        <position position="19"/>
    </location>
    <ligand>
        <name>ATP</name>
        <dbReference type="ChEBI" id="CHEBI:30616"/>
    </ligand>
</feature>
<feature type="binding site" evidence="1">
    <location>
        <begin position="61"/>
        <end position="66"/>
    </location>
    <ligand>
        <name>ATP</name>
        <dbReference type="ChEBI" id="CHEBI:30616"/>
    </ligand>
</feature>
<feature type="binding site" evidence="1">
    <location>
        <position position="256"/>
    </location>
    <ligand>
        <name>ATP</name>
        <dbReference type="ChEBI" id="CHEBI:30616"/>
    </ligand>
</feature>
<feature type="binding site" evidence="1">
    <location>
        <position position="321"/>
    </location>
    <ligand>
        <name>ATP</name>
        <dbReference type="ChEBI" id="CHEBI:30616"/>
    </ligand>
</feature>
<feature type="binding site" evidence="1">
    <location>
        <position position="393"/>
    </location>
    <ligand>
        <name>ATP</name>
        <dbReference type="ChEBI" id="CHEBI:30616"/>
    </ligand>
</feature>
<organism>
    <name type="scientific">Ralstonia pickettii (strain 12J)</name>
    <dbReference type="NCBI Taxonomy" id="402626"/>
    <lineage>
        <taxon>Bacteria</taxon>
        <taxon>Pseudomonadati</taxon>
        <taxon>Pseudomonadota</taxon>
        <taxon>Betaproteobacteria</taxon>
        <taxon>Burkholderiales</taxon>
        <taxon>Burkholderiaceae</taxon>
        <taxon>Ralstonia</taxon>
    </lineage>
</organism>